<organism>
    <name type="scientific">Mareca penelope</name>
    <name type="common">Eurasian wigeon</name>
    <name type="synonym">Anas penelope</name>
    <dbReference type="NCBI Taxonomy" id="8838"/>
    <lineage>
        <taxon>Eukaryota</taxon>
        <taxon>Metazoa</taxon>
        <taxon>Chordata</taxon>
        <taxon>Craniata</taxon>
        <taxon>Vertebrata</taxon>
        <taxon>Euteleostomi</taxon>
        <taxon>Archelosauria</taxon>
        <taxon>Archosauria</taxon>
        <taxon>Dinosauria</taxon>
        <taxon>Saurischia</taxon>
        <taxon>Theropoda</taxon>
        <taxon>Coelurosauria</taxon>
        <taxon>Aves</taxon>
        <taxon>Neognathae</taxon>
        <taxon>Galloanserae</taxon>
        <taxon>Anseriformes</taxon>
        <taxon>Anatidae</taxon>
        <taxon>Anatinae</taxon>
        <taxon>Mareca</taxon>
    </lineage>
</organism>
<comment type="function">
    <text>Involved in oxygen transport from the lung to the various peripheral tissues.</text>
</comment>
<comment type="subunit">
    <text>Heterotetramer of two alpha chains and two beta chains.</text>
</comment>
<comment type="tissue specificity">
    <text>Red blood cells.</text>
</comment>
<comment type="similarity">
    <text evidence="2">Belongs to the globin family.</text>
</comment>
<dbReference type="PIR" id="JU0336">
    <property type="entry name" value="HADKAW"/>
</dbReference>
<dbReference type="SMR" id="P22740"/>
<dbReference type="GO" id="GO:0072562">
    <property type="term" value="C:blood microparticle"/>
    <property type="evidence" value="ECO:0007669"/>
    <property type="project" value="TreeGrafter"/>
</dbReference>
<dbReference type="GO" id="GO:0031838">
    <property type="term" value="C:haptoglobin-hemoglobin complex"/>
    <property type="evidence" value="ECO:0007669"/>
    <property type="project" value="TreeGrafter"/>
</dbReference>
<dbReference type="GO" id="GO:0005833">
    <property type="term" value="C:hemoglobin complex"/>
    <property type="evidence" value="ECO:0007669"/>
    <property type="project" value="InterPro"/>
</dbReference>
<dbReference type="GO" id="GO:0031720">
    <property type="term" value="F:haptoglobin binding"/>
    <property type="evidence" value="ECO:0007669"/>
    <property type="project" value="TreeGrafter"/>
</dbReference>
<dbReference type="GO" id="GO:0020037">
    <property type="term" value="F:heme binding"/>
    <property type="evidence" value="ECO:0007669"/>
    <property type="project" value="InterPro"/>
</dbReference>
<dbReference type="GO" id="GO:0005506">
    <property type="term" value="F:iron ion binding"/>
    <property type="evidence" value="ECO:0007669"/>
    <property type="project" value="InterPro"/>
</dbReference>
<dbReference type="GO" id="GO:0043177">
    <property type="term" value="F:organic acid binding"/>
    <property type="evidence" value="ECO:0007669"/>
    <property type="project" value="TreeGrafter"/>
</dbReference>
<dbReference type="GO" id="GO:0019825">
    <property type="term" value="F:oxygen binding"/>
    <property type="evidence" value="ECO:0007669"/>
    <property type="project" value="InterPro"/>
</dbReference>
<dbReference type="GO" id="GO:0005344">
    <property type="term" value="F:oxygen carrier activity"/>
    <property type="evidence" value="ECO:0007669"/>
    <property type="project" value="UniProtKB-KW"/>
</dbReference>
<dbReference type="GO" id="GO:0004601">
    <property type="term" value="F:peroxidase activity"/>
    <property type="evidence" value="ECO:0007669"/>
    <property type="project" value="TreeGrafter"/>
</dbReference>
<dbReference type="GO" id="GO:0042744">
    <property type="term" value="P:hydrogen peroxide catabolic process"/>
    <property type="evidence" value="ECO:0007669"/>
    <property type="project" value="TreeGrafter"/>
</dbReference>
<dbReference type="CDD" id="cd08927">
    <property type="entry name" value="Hb-alpha-like"/>
    <property type="match status" value="1"/>
</dbReference>
<dbReference type="FunFam" id="1.10.490.10:FF:000002">
    <property type="entry name" value="Hemoglobin subunit alpha"/>
    <property type="match status" value="1"/>
</dbReference>
<dbReference type="Gene3D" id="1.10.490.10">
    <property type="entry name" value="Globins"/>
    <property type="match status" value="1"/>
</dbReference>
<dbReference type="InterPro" id="IPR000971">
    <property type="entry name" value="Globin"/>
</dbReference>
<dbReference type="InterPro" id="IPR009050">
    <property type="entry name" value="Globin-like_sf"/>
</dbReference>
<dbReference type="InterPro" id="IPR012292">
    <property type="entry name" value="Globin/Proto"/>
</dbReference>
<dbReference type="InterPro" id="IPR002338">
    <property type="entry name" value="Hemoglobin_a-typ"/>
</dbReference>
<dbReference type="InterPro" id="IPR050056">
    <property type="entry name" value="Hemoglobin_oxygen_transport"/>
</dbReference>
<dbReference type="InterPro" id="IPR002339">
    <property type="entry name" value="Hemoglobin_pi"/>
</dbReference>
<dbReference type="PANTHER" id="PTHR11442">
    <property type="entry name" value="HEMOGLOBIN FAMILY MEMBER"/>
    <property type="match status" value="1"/>
</dbReference>
<dbReference type="PANTHER" id="PTHR11442:SF48">
    <property type="entry name" value="HEMOGLOBIN SUBUNIT ALPHA"/>
    <property type="match status" value="1"/>
</dbReference>
<dbReference type="Pfam" id="PF00042">
    <property type="entry name" value="Globin"/>
    <property type="match status" value="1"/>
</dbReference>
<dbReference type="PRINTS" id="PR00612">
    <property type="entry name" value="ALPHAHAEM"/>
</dbReference>
<dbReference type="PRINTS" id="PR00815">
    <property type="entry name" value="PIHAEM"/>
</dbReference>
<dbReference type="SUPFAM" id="SSF46458">
    <property type="entry name" value="Globin-like"/>
    <property type="match status" value="1"/>
</dbReference>
<dbReference type="PROSITE" id="PS01033">
    <property type="entry name" value="GLOBIN"/>
    <property type="match status" value="1"/>
</dbReference>
<protein>
    <recommendedName>
        <fullName>Hemoglobin subunit alpha-A</fullName>
    </recommendedName>
    <alternativeName>
        <fullName>Alpha-A-globin</fullName>
    </alternativeName>
    <alternativeName>
        <fullName>Hemoglobin alpha-A chain</fullName>
    </alternativeName>
</protein>
<accession>P22740</accession>
<reference key="1">
    <citation type="submission" date="1991-03" db="PIR data bank">
        <authorList>
            <person name="Abbasi A."/>
            <person name="Zaidi Z.H."/>
        </authorList>
    </citation>
    <scope>PROTEIN SEQUENCE OF 2-142</scope>
</reference>
<sequence length="142" mass="15361">MVLSAADKTNVKGVFSKIGGHAEEYGAETLERMFIAYPQTKTYFPHFDLSHGSAQIKAHGKKVAAALVEAVNHIDDIAGALSKLSDLHAQKLRVDPVNFKFLGHCFLVVVAIHHPAALTPEVHASLDKFLCAVGAVLTAKYR</sequence>
<gene>
    <name type="primary">HBAA</name>
</gene>
<proteinExistence type="evidence at protein level"/>
<keyword id="KW-0903">Direct protein sequencing</keyword>
<keyword id="KW-0349">Heme</keyword>
<keyword id="KW-0408">Iron</keyword>
<keyword id="KW-0479">Metal-binding</keyword>
<keyword id="KW-0561">Oxygen transport</keyword>
<keyword id="KW-0813">Transport</keyword>
<feature type="initiator methionine" description="Removed" evidence="1">
    <location>
        <position position="1"/>
    </location>
</feature>
<feature type="chain" id="PRO_0000052546" description="Hemoglobin subunit alpha-A">
    <location>
        <begin position="2"/>
        <end position="142"/>
    </location>
</feature>
<feature type="domain" description="Globin" evidence="2">
    <location>
        <begin position="2"/>
        <end position="142"/>
    </location>
</feature>
<feature type="binding site" evidence="2">
    <location>
        <position position="59"/>
    </location>
    <ligand>
        <name>O2</name>
        <dbReference type="ChEBI" id="CHEBI:15379"/>
    </ligand>
</feature>
<feature type="binding site" description="proximal binding residue" evidence="2">
    <location>
        <position position="88"/>
    </location>
    <ligand>
        <name>heme b</name>
        <dbReference type="ChEBI" id="CHEBI:60344"/>
    </ligand>
    <ligandPart>
        <name>Fe</name>
        <dbReference type="ChEBI" id="CHEBI:18248"/>
    </ligandPart>
</feature>
<name>HBA_MARPN</name>
<evidence type="ECO:0000250" key="1"/>
<evidence type="ECO:0000255" key="2">
    <source>
        <dbReference type="PROSITE-ProRule" id="PRU00238"/>
    </source>
</evidence>